<proteinExistence type="inferred from homology"/>
<evidence type="ECO:0000255" key="1">
    <source>
        <dbReference type="HAMAP-Rule" id="MF_00412"/>
    </source>
</evidence>
<feature type="chain" id="PRO_1000049929" description="Gamma-glutamyl phosphate reductase">
    <location>
        <begin position="1"/>
        <end position="426"/>
    </location>
</feature>
<gene>
    <name evidence="1" type="primary">proA</name>
    <name type="ordered locus">Aave_4545</name>
</gene>
<accession>A1TVU4</accession>
<reference key="1">
    <citation type="submission" date="2006-12" db="EMBL/GenBank/DDBJ databases">
        <title>Complete sequence of Acidovorax avenae subsp. citrulli AAC00-1.</title>
        <authorList>
            <person name="Copeland A."/>
            <person name="Lucas S."/>
            <person name="Lapidus A."/>
            <person name="Barry K."/>
            <person name="Detter J.C."/>
            <person name="Glavina del Rio T."/>
            <person name="Dalin E."/>
            <person name="Tice H."/>
            <person name="Pitluck S."/>
            <person name="Kiss H."/>
            <person name="Brettin T."/>
            <person name="Bruce D."/>
            <person name="Han C."/>
            <person name="Tapia R."/>
            <person name="Gilna P."/>
            <person name="Schmutz J."/>
            <person name="Larimer F."/>
            <person name="Land M."/>
            <person name="Hauser L."/>
            <person name="Kyrpides N."/>
            <person name="Kim E."/>
            <person name="Stahl D."/>
            <person name="Richardson P."/>
        </authorList>
    </citation>
    <scope>NUCLEOTIDE SEQUENCE [LARGE SCALE GENOMIC DNA]</scope>
    <source>
        <strain>AAC00-1</strain>
    </source>
</reference>
<keyword id="KW-0028">Amino-acid biosynthesis</keyword>
<keyword id="KW-0963">Cytoplasm</keyword>
<keyword id="KW-0521">NADP</keyword>
<keyword id="KW-0560">Oxidoreductase</keyword>
<keyword id="KW-0641">Proline biosynthesis</keyword>
<organism>
    <name type="scientific">Paracidovorax citrulli (strain AAC00-1)</name>
    <name type="common">Acidovorax citrulli</name>
    <dbReference type="NCBI Taxonomy" id="397945"/>
    <lineage>
        <taxon>Bacteria</taxon>
        <taxon>Pseudomonadati</taxon>
        <taxon>Pseudomonadota</taxon>
        <taxon>Betaproteobacteria</taxon>
        <taxon>Burkholderiales</taxon>
        <taxon>Comamonadaceae</taxon>
        <taxon>Paracidovorax</taxon>
    </lineage>
</organism>
<dbReference type="EC" id="1.2.1.41" evidence="1"/>
<dbReference type="EMBL" id="CP000512">
    <property type="protein sequence ID" value="ABM35082.1"/>
    <property type="molecule type" value="Genomic_DNA"/>
</dbReference>
<dbReference type="RefSeq" id="WP_011797550.1">
    <property type="nucleotide sequence ID" value="NC_008752.1"/>
</dbReference>
<dbReference type="SMR" id="A1TVU4"/>
<dbReference type="STRING" id="397945.Aave_4545"/>
<dbReference type="KEGG" id="aav:Aave_4545"/>
<dbReference type="eggNOG" id="COG0014">
    <property type="taxonomic scope" value="Bacteria"/>
</dbReference>
<dbReference type="HOGENOM" id="CLU_030231_0_0_4"/>
<dbReference type="UniPathway" id="UPA00098">
    <property type="reaction ID" value="UER00360"/>
</dbReference>
<dbReference type="Proteomes" id="UP000002596">
    <property type="component" value="Chromosome"/>
</dbReference>
<dbReference type="GO" id="GO:0005737">
    <property type="term" value="C:cytoplasm"/>
    <property type="evidence" value="ECO:0007669"/>
    <property type="project" value="UniProtKB-SubCell"/>
</dbReference>
<dbReference type="GO" id="GO:0004350">
    <property type="term" value="F:glutamate-5-semialdehyde dehydrogenase activity"/>
    <property type="evidence" value="ECO:0007669"/>
    <property type="project" value="UniProtKB-UniRule"/>
</dbReference>
<dbReference type="GO" id="GO:0050661">
    <property type="term" value="F:NADP binding"/>
    <property type="evidence" value="ECO:0007669"/>
    <property type="project" value="InterPro"/>
</dbReference>
<dbReference type="GO" id="GO:0055129">
    <property type="term" value="P:L-proline biosynthetic process"/>
    <property type="evidence" value="ECO:0007669"/>
    <property type="project" value="UniProtKB-UniRule"/>
</dbReference>
<dbReference type="CDD" id="cd07079">
    <property type="entry name" value="ALDH_F18-19_ProA-GPR"/>
    <property type="match status" value="1"/>
</dbReference>
<dbReference type="FunFam" id="3.40.309.10:FF:000006">
    <property type="entry name" value="Gamma-glutamyl phosphate reductase"/>
    <property type="match status" value="1"/>
</dbReference>
<dbReference type="Gene3D" id="3.40.605.10">
    <property type="entry name" value="Aldehyde Dehydrogenase, Chain A, domain 1"/>
    <property type="match status" value="1"/>
</dbReference>
<dbReference type="Gene3D" id="3.40.309.10">
    <property type="entry name" value="Aldehyde Dehydrogenase, Chain A, domain 2"/>
    <property type="match status" value="1"/>
</dbReference>
<dbReference type="HAMAP" id="MF_00412">
    <property type="entry name" value="ProA"/>
    <property type="match status" value="1"/>
</dbReference>
<dbReference type="InterPro" id="IPR016161">
    <property type="entry name" value="Ald_DH/histidinol_DH"/>
</dbReference>
<dbReference type="InterPro" id="IPR016163">
    <property type="entry name" value="Ald_DH_C"/>
</dbReference>
<dbReference type="InterPro" id="IPR016162">
    <property type="entry name" value="Ald_DH_N"/>
</dbReference>
<dbReference type="InterPro" id="IPR015590">
    <property type="entry name" value="Aldehyde_DH_dom"/>
</dbReference>
<dbReference type="InterPro" id="IPR020593">
    <property type="entry name" value="G-glutamylP_reductase_CS"/>
</dbReference>
<dbReference type="InterPro" id="IPR012134">
    <property type="entry name" value="Glu-5-SA_DH"/>
</dbReference>
<dbReference type="InterPro" id="IPR000965">
    <property type="entry name" value="GPR_dom"/>
</dbReference>
<dbReference type="NCBIfam" id="NF001221">
    <property type="entry name" value="PRK00197.1"/>
    <property type="match status" value="1"/>
</dbReference>
<dbReference type="NCBIfam" id="TIGR00407">
    <property type="entry name" value="proA"/>
    <property type="match status" value="1"/>
</dbReference>
<dbReference type="PANTHER" id="PTHR11063:SF8">
    <property type="entry name" value="DELTA-1-PYRROLINE-5-CARBOXYLATE SYNTHASE"/>
    <property type="match status" value="1"/>
</dbReference>
<dbReference type="PANTHER" id="PTHR11063">
    <property type="entry name" value="GLUTAMATE SEMIALDEHYDE DEHYDROGENASE"/>
    <property type="match status" value="1"/>
</dbReference>
<dbReference type="Pfam" id="PF00171">
    <property type="entry name" value="Aldedh"/>
    <property type="match status" value="2"/>
</dbReference>
<dbReference type="PIRSF" id="PIRSF000151">
    <property type="entry name" value="GPR"/>
    <property type="match status" value="1"/>
</dbReference>
<dbReference type="SUPFAM" id="SSF53720">
    <property type="entry name" value="ALDH-like"/>
    <property type="match status" value="1"/>
</dbReference>
<dbReference type="PROSITE" id="PS01223">
    <property type="entry name" value="PROA"/>
    <property type="match status" value="1"/>
</dbReference>
<protein>
    <recommendedName>
        <fullName evidence="1">Gamma-glutamyl phosphate reductase</fullName>
        <shortName evidence="1">GPR</shortName>
        <ecNumber evidence="1">1.2.1.41</ecNumber>
    </recommendedName>
    <alternativeName>
        <fullName evidence="1">Glutamate-5-semialdehyde dehydrogenase</fullName>
    </alternativeName>
    <alternativeName>
        <fullName evidence="1">Glutamyl-gamma-semialdehyde dehydrogenase</fullName>
        <shortName evidence="1">GSA dehydrogenase</shortName>
    </alternativeName>
</protein>
<sequence>MNAQHIAETLHALGSQAKAASALMARAPSAVKNRALLALARRLRDNTTALQADNARDLERARAAGLAEPMVDRLKLTPKVLETCALGCEQLATMGDVIGEISGMRQQPSGIRVGQMRVPIGVFGMIYESRPNVTIEAASLSIKSGNACILRGGSEAIDSNRALARLVQEALEEAGLPGDAVQLVQTTDREAVGHLIAMPQYVDVIIPRGGKGLIERISRDAKVPVIKHLDGNCHTYVDDPCDVAMAVKVADNAKTQKYSPCNASEGLLVARGVAAEFLPRIGAVYAAKGVEMRGCPETLALLAGVPGATLVHATEQDWSEEYLAPIISIKVVEGLDEAIAHINRYGSHHTDAILTRDHMHAQRFLREVDSASVMVNASTRFADGFEYGLGAEIGISTDKFHARGPVGIEGLTSLKWVVLGEGDIRA</sequence>
<comment type="function">
    <text evidence="1">Catalyzes the NADPH-dependent reduction of L-glutamate 5-phosphate into L-glutamate 5-semialdehyde and phosphate. The product spontaneously undergoes cyclization to form 1-pyrroline-5-carboxylate.</text>
</comment>
<comment type="catalytic activity">
    <reaction evidence="1">
        <text>L-glutamate 5-semialdehyde + phosphate + NADP(+) = L-glutamyl 5-phosphate + NADPH + H(+)</text>
        <dbReference type="Rhea" id="RHEA:19541"/>
        <dbReference type="ChEBI" id="CHEBI:15378"/>
        <dbReference type="ChEBI" id="CHEBI:43474"/>
        <dbReference type="ChEBI" id="CHEBI:57783"/>
        <dbReference type="ChEBI" id="CHEBI:58066"/>
        <dbReference type="ChEBI" id="CHEBI:58274"/>
        <dbReference type="ChEBI" id="CHEBI:58349"/>
        <dbReference type="EC" id="1.2.1.41"/>
    </reaction>
</comment>
<comment type="pathway">
    <text evidence="1">Amino-acid biosynthesis; L-proline biosynthesis; L-glutamate 5-semialdehyde from L-glutamate: step 2/2.</text>
</comment>
<comment type="subcellular location">
    <subcellularLocation>
        <location evidence="1">Cytoplasm</location>
    </subcellularLocation>
</comment>
<comment type="similarity">
    <text evidence="1">Belongs to the gamma-glutamyl phosphate reductase family.</text>
</comment>
<name>PROA_PARC0</name>